<gene>
    <name type="primary">FOLD4</name>
    <name type="synonym">DHC4</name>
    <name type="synonym">EMB3127</name>
    <name type="ordered locus">At4g00620</name>
    <name type="ORF">F6N23.26</name>
</gene>
<proteinExistence type="evidence at protein level"/>
<dbReference type="EC" id="1.5.1.5"/>
<dbReference type="EC" id="3.5.4.9"/>
<dbReference type="EMBL" id="AF058919">
    <property type="protein sequence ID" value="AAC13627.1"/>
    <property type="molecule type" value="Genomic_DNA"/>
</dbReference>
<dbReference type="EMBL" id="AL161472">
    <property type="protein sequence ID" value="CAB80871.1"/>
    <property type="molecule type" value="Genomic_DNA"/>
</dbReference>
<dbReference type="EMBL" id="CP002687">
    <property type="protein sequence ID" value="AEE81910.1"/>
    <property type="molecule type" value="Genomic_DNA"/>
</dbReference>
<dbReference type="EMBL" id="AY059944">
    <property type="protein sequence ID" value="AAL24426.1"/>
    <property type="molecule type" value="mRNA"/>
</dbReference>
<dbReference type="EMBL" id="BT000066">
    <property type="protein sequence ID" value="AAN15385.1"/>
    <property type="molecule type" value="mRNA"/>
</dbReference>
<dbReference type="PIR" id="T01226">
    <property type="entry name" value="T01226"/>
</dbReference>
<dbReference type="RefSeq" id="NP_191971.1">
    <property type="nucleotide sequence ID" value="NM_116287.4"/>
</dbReference>
<dbReference type="SMR" id="O65271"/>
<dbReference type="BioGRID" id="11135">
    <property type="interactions" value="16"/>
</dbReference>
<dbReference type="FunCoup" id="O65271">
    <property type="interactions" value="1315"/>
</dbReference>
<dbReference type="IntAct" id="O65271">
    <property type="interactions" value="1"/>
</dbReference>
<dbReference type="STRING" id="3702.O65271"/>
<dbReference type="iPTMnet" id="O65271"/>
<dbReference type="PaxDb" id="3702-AT4G00620.1"/>
<dbReference type="ProteomicsDB" id="230433"/>
<dbReference type="EnsemblPlants" id="AT4G00620.1">
    <property type="protein sequence ID" value="AT4G00620.1"/>
    <property type="gene ID" value="AT4G00620"/>
</dbReference>
<dbReference type="GeneID" id="825824"/>
<dbReference type="Gramene" id="AT4G00620.1">
    <property type="protein sequence ID" value="AT4G00620.1"/>
    <property type="gene ID" value="AT4G00620"/>
</dbReference>
<dbReference type="KEGG" id="ath:AT4G00620"/>
<dbReference type="Araport" id="AT4G00620"/>
<dbReference type="TAIR" id="AT4G00620">
    <property type="gene designation" value="EMB3127"/>
</dbReference>
<dbReference type="eggNOG" id="KOG0089">
    <property type="taxonomic scope" value="Eukaryota"/>
</dbReference>
<dbReference type="HOGENOM" id="CLU_034045_1_2_1"/>
<dbReference type="InParanoid" id="O65271"/>
<dbReference type="OMA" id="YGCMKML"/>
<dbReference type="PhylomeDB" id="O65271"/>
<dbReference type="BioCyc" id="ARA:AT4G00620-MONOMER"/>
<dbReference type="UniPathway" id="UPA00193"/>
<dbReference type="PRO" id="PR:O65271"/>
<dbReference type="Proteomes" id="UP000006548">
    <property type="component" value="Chromosome 4"/>
</dbReference>
<dbReference type="ExpressionAtlas" id="O65271">
    <property type="expression patterns" value="baseline and differential"/>
</dbReference>
<dbReference type="GO" id="GO:0009507">
    <property type="term" value="C:chloroplast"/>
    <property type="evidence" value="ECO:0007005"/>
    <property type="project" value="TAIR"/>
</dbReference>
<dbReference type="GO" id="GO:0004477">
    <property type="term" value="F:methenyltetrahydrofolate cyclohydrolase activity"/>
    <property type="evidence" value="ECO:0007669"/>
    <property type="project" value="UniProtKB-EC"/>
</dbReference>
<dbReference type="GO" id="GO:0004488">
    <property type="term" value="F:methylenetetrahydrofolate dehydrogenase (NADP+) activity"/>
    <property type="evidence" value="ECO:0007669"/>
    <property type="project" value="UniProtKB-EC"/>
</dbReference>
<dbReference type="GO" id="GO:0009853">
    <property type="term" value="P:photorespiration"/>
    <property type="evidence" value="ECO:0007669"/>
    <property type="project" value="UniProtKB-KW"/>
</dbReference>
<dbReference type="GO" id="GO:0035999">
    <property type="term" value="P:tetrahydrofolate interconversion"/>
    <property type="evidence" value="ECO:0007669"/>
    <property type="project" value="UniProtKB-UniPathway"/>
</dbReference>
<dbReference type="CDD" id="cd01080">
    <property type="entry name" value="NAD_bind_m-THF_DH_Cyclohyd"/>
    <property type="match status" value="1"/>
</dbReference>
<dbReference type="FunFam" id="3.40.50.10860:FF:000001">
    <property type="entry name" value="Bifunctional protein FolD"/>
    <property type="match status" value="1"/>
</dbReference>
<dbReference type="FunFam" id="3.40.50.720:FF:000006">
    <property type="entry name" value="Bifunctional protein FolD"/>
    <property type="match status" value="1"/>
</dbReference>
<dbReference type="Gene3D" id="3.40.50.10860">
    <property type="entry name" value="Leucine Dehydrogenase, chain A, domain 1"/>
    <property type="match status" value="1"/>
</dbReference>
<dbReference type="Gene3D" id="3.40.50.720">
    <property type="entry name" value="NAD(P)-binding Rossmann-like Domain"/>
    <property type="match status" value="1"/>
</dbReference>
<dbReference type="HAMAP" id="MF_01576">
    <property type="entry name" value="THF_DHG_CYH"/>
    <property type="match status" value="1"/>
</dbReference>
<dbReference type="InterPro" id="IPR046346">
    <property type="entry name" value="Aminoacid_DH-like_N_sf"/>
</dbReference>
<dbReference type="InterPro" id="IPR036291">
    <property type="entry name" value="NAD(P)-bd_dom_sf"/>
</dbReference>
<dbReference type="InterPro" id="IPR000672">
    <property type="entry name" value="THF_DH/CycHdrlase"/>
</dbReference>
<dbReference type="InterPro" id="IPR020630">
    <property type="entry name" value="THF_DH/CycHdrlase_cat_dom"/>
</dbReference>
<dbReference type="InterPro" id="IPR020867">
    <property type="entry name" value="THF_DH/CycHdrlase_CS"/>
</dbReference>
<dbReference type="InterPro" id="IPR020631">
    <property type="entry name" value="THF_DH/CycHdrlase_NAD-bd_dom"/>
</dbReference>
<dbReference type="NCBIfam" id="NF010783">
    <property type="entry name" value="PRK14186.1"/>
    <property type="match status" value="1"/>
</dbReference>
<dbReference type="PANTHER" id="PTHR48099:SF5">
    <property type="entry name" value="C-1-TETRAHYDROFOLATE SYNTHASE, CYTOPLASMIC"/>
    <property type="match status" value="1"/>
</dbReference>
<dbReference type="PANTHER" id="PTHR48099">
    <property type="entry name" value="C-1-TETRAHYDROFOLATE SYNTHASE, CYTOPLASMIC-RELATED"/>
    <property type="match status" value="1"/>
</dbReference>
<dbReference type="Pfam" id="PF00763">
    <property type="entry name" value="THF_DHG_CYH"/>
    <property type="match status" value="1"/>
</dbReference>
<dbReference type="Pfam" id="PF02882">
    <property type="entry name" value="THF_DHG_CYH_C"/>
    <property type="match status" value="1"/>
</dbReference>
<dbReference type="PRINTS" id="PR00085">
    <property type="entry name" value="THFDHDRGNASE"/>
</dbReference>
<dbReference type="SUPFAM" id="SSF53223">
    <property type="entry name" value="Aminoacid dehydrogenase-like, N-terminal domain"/>
    <property type="match status" value="1"/>
</dbReference>
<dbReference type="SUPFAM" id="SSF51735">
    <property type="entry name" value="NAD(P)-binding Rossmann-fold domains"/>
    <property type="match status" value="1"/>
</dbReference>
<dbReference type="PROSITE" id="PS00767">
    <property type="entry name" value="THF_DHG_CYH_2"/>
    <property type="match status" value="1"/>
</dbReference>
<feature type="transit peptide" description="Chloroplast" evidence="4">
    <location>
        <begin position="1"/>
        <end position="51"/>
    </location>
</feature>
<feature type="chain" id="PRO_0000424347" description="Bifunctional protein FolD 4, chloroplastic">
    <location>
        <begin position="52"/>
        <end position="360"/>
    </location>
</feature>
<feature type="modified residue" description="N-acetylserine" evidence="4">
    <location>
        <position position="52"/>
    </location>
</feature>
<comment type="function">
    <text evidence="1">Catalyzes the oxidation of 5,10-methylenetetrahydrofolate to 5,10-methenyltetrahydrofolate and then the hydrolysis of 5,10-methenyltetrahydrofolate to 10-formyltetrahydrofolate.</text>
</comment>
<comment type="catalytic activity">
    <reaction>
        <text>(6R)-5,10-methylene-5,6,7,8-tetrahydrofolate + NADP(+) = (6R)-5,10-methenyltetrahydrofolate + NADPH</text>
        <dbReference type="Rhea" id="RHEA:22812"/>
        <dbReference type="ChEBI" id="CHEBI:15636"/>
        <dbReference type="ChEBI" id="CHEBI:57455"/>
        <dbReference type="ChEBI" id="CHEBI:57783"/>
        <dbReference type="ChEBI" id="CHEBI:58349"/>
        <dbReference type="EC" id="1.5.1.5"/>
    </reaction>
</comment>
<comment type="catalytic activity">
    <reaction>
        <text>(6R)-5,10-methenyltetrahydrofolate + H2O = (6R)-10-formyltetrahydrofolate + H(+)</text>
        <dbReference type="Rhea" id="RHEA:23700"/>
        <dbReference type="ChEBI" id="CHEBI:15377"/>
        <dbReference type="ChEBI" id="CHEBI:15378"/>
        <dbReference type="ChEBI" id="CHEBI:57455"/>
        <dbReference type="ChEBI" id="CHEBI:195366"/>
        <dbReference type="EC" id="3.5.4.9"/>
    </reaction>
</comment>
<comment type="pathway">
    <text>One-carbon metabolism; tetrahydrofolate interconversion.</text>
</comment>
<comment type="subunit">
    <text evidence="1">Homodimer.</text>
</comment>
<comment type="subcellular location">
    <subcellularLocation>
        <location evidence="2">Plastid</location>
        <location evidence="2">Chloroplast</location>
    </subcellularLocation>
</comment>
<comment type="similarity">
    <text evidence="3">Belongs to the tetrahydrofolate dehydrogenase/cyclohydrolase family.</text>
</comment>
<sequence length="360" mass="38742">MASMMFTDCSSTTTSRLIHLNRSSGTFLLRQCVGQLRLQTTASGRGCCIRSSSSPISSISADTKSEGGAIVIDGKAVAKKIRDEITIEVSRMKESIGVIPGLAVILVGDRKDSATYVRNKKKACDSVGIKSFEVRLAEDSSEEEVLKSVSGFNDDPSVHGILVQLPLPSHMDEQNILNAVSIEKDVDGFHPLNIGRLAMRGREPLFVPCTPKGCIELLHRYNIEIKGKRAVVIGRSNIVGMPAALLLQREDATVSIIHSRTKNPEEITREADIIISAVGQPNMVRGSWIKPGAVLIDVGINPVEDPSAARGYRLVGDICYEEASKVASAITPVPGGVGPMTIAMLLSNTLTSAKRIHNFQ</sequence>
<keyword id="KW-0007">Acetylation</keyword>
<keyword id="KW-0150">Chloroplast</keyword>
<keyword id="KW-0378">Hydrolase</keyword>
<keyword id="KW-0511">Multifunctional enzyme</keyword>
<keyword id="KW-0521">NADP</keyword>
<keyword id="KW-0554">One-carbon metabolism</keyword>
<keyword id="KW-0560">Oxidoreductase</keyword>
<keyword id="KW-0601">Photorespiration</keyword>
<keyword id="KW-0934">Plastid</keyword>
<keyword id="KW-1185">Reference proteome</keyword>
<keyword id="KW-0809">Transit peptide</keyword>
<reference key="1">
    <citation type="journal article" date="1999" name="Nature">
        <title>Sequence and analysis of chromosome 4 of the plant Arabidopsis thaliana.</title>
        <authorList>
            <person name="Mayer K.F.X."/>
            <person name="Schueller C."/>
            <person name="Wambutt R."/>
            <person name="Murphy G."/>
            <person name="Volckaert G."/>
            <person name="Pohl T."/>
            <person name="Duesterhoeft A."/>
            <person name="Stiekema W."/>
            <person name="Entian K.-D."/>
            <person name="Terryn N."/>
            <person name="Harris B."/>
            <person name="Ansorge W."/>
            <person name="Brandt P."/>
            <person name="Grivell L.A."/>
            <person name="Rieger M."/>
            <person name="Weichselgartner M."/>
            <person name="de Simone V."/>
            <person name="Obermaier B."/>
            <person name="Mache R."/>
            <person name="Mueller M."/>
            <person name="Kreis M."/>
            <person name="Delseny M."/>
            <person name="Puigdomenech P."/>
            <person name="Watson M."/>
            <person name="Schmidtheini T."/>
            <person name="Reichert B."/>
            <person name="Portetelle D."/>
            <person name="Perez-Alonso M."/>
            <person name="Boutry M."/>
            <person name="Bancroft I."/>
            <person name="Vos P."/>
            <person name="Hoheisel J."/>
            <person name="Zimmermann W."/>
            <person name="Wedler H."/>
            <person name="Ridley P."/>
            <person name="Langham S.-A."/>
            <person name="McCullagh B."/>
            <person name="Bilham L."/>
            <person name="Robben J."/>
            <person name="van der Schueren J."/>
            <person name="Grymonprez B."/>
            <person name="Chuang Y.-J."/>
            <person name="Vandenbussche F."/>
            <person name="Braeken M."/>
            <person name="Weltjens I."/>
            <person name="Voet M."/>
            <person name="Bastiaens I."/>
            <person name="Aert R."/>
            <person name="Defoor E."/>
            <person name="Weitzenegger T."/>
            <person name="Bothe G."/>
            <person name="Ramsperger U."/>
            <person name="Hilbert H."/>
            <person name="Braun M."/>
            <person name="Holzer E."/>
            <person name="Brandt A."/>
            <person name="Peters S."/>
            <person name="van Staveren M."/>
            <person name="Dirkse W."/>
            <person name="Mooijman P."/>
            <person name="Klein Lankhorst R."/>
            <person name="Rose M."/>
            <person name="Hauf J."/>
            <person name="Koetter P."/>
            <person name="Berneiser S."/>
            <person name="Hempel S."/>
            <person name="Feldpausch M."/>
            <person name="Lamberth S."/>
            <person name="Van den Daele H."/>
            <person name="De Keyser A."/>
            <person name="Buysshaert C."/>
            <person name="Gielen J."/>
            <person name="Villarroel R."/>
            <person name="De Clercq R."/>
            <person name="van Montagu M."/>
            <person name="Rogers J."/>
            <person name="Cronin A."/>
            <person name="Quail M.A."/>
            <person name="Bray-Allen S."/>
            <person name="Clark L."/>
            <person name="Doggett J."/>
            <person name="Hall S."/>
            <person name="Kay M."/>
            <person name="Lennard N."/>
            <person name="McLay K."/>
            <person name="Mayes R."/>
            <person name="Pettett A."/>
            <person name="Rajandream M.A."/>
            <person name="Lyne M."/>
            <person name="Benes V."/>
            <person name="Rechmann S."/>
            <person name="Borkova D."/>
            <person name="Bloecker H."/>
            <person name="Scharfe M."/>
            <person name="Grimm M."/>
            <person name="Loehnert T.-H."/>
            <person name="Dose S."/>
            <person name="de Haan M."/>
            <person name="Maarse A.C."/>
            <person name="Schaefer M."/>
            <person name="Mueller-Auer S."/>
            <person name="Gabel C."/>
            <person name="Fuchs M."/>
            <person name="Fartmann B."/>
            <person name="Granderath K."/>
            <person name="Dauner D."/>
            <person name="Herzl A."/>
            <person name="Neumann S."/>
            <person name="Argiriou A."/>
            <person name="Vitale D."/>
            <person name="Liguori R."/>
            <person name="Piravandi E."/>
            <person name="Massenet O."/>
            <person name="Quigley F."/>
            <person name="Clabauld G."/>
            <person name="Muendlein A."/>
            <person name="Felber R."/>
            <person name="Schnabl S."/>
            <person name="Hiller R."/>
            <person name="Schmidt W."/>
            <person name="Lecharny A."/>
            <person name="Aubourg S."/>
            <person name="Chefdor F."/>
            <person name="Cooke R."/>
            <person name="Berger C."/>
            <person name="Monfort A."/>
            <person name="Casacuberta E."/>
            <person name="Gibbons T."/>
            <person name="Weber N."/>
            <person name="Vandenbol M."/>
            <person name="Bargues M."/>
            <person name="Terol J."/>
            <person name="Torres A."/>
            <person name="Perez-Perez A."/>
            <person name="Purnelle B."/>
            <person name="Bent E."/>
            <person name="Johnson S."/>
            <person name="Tacon D."/>
            <person name="Jesse T."/>
            <person name="Heijnen L."/>
            <person name="Schwarz S."/>
            <person name="Scholler P."/>
            <person name="Heber S."/>
            <person name="Francs P."/>
            <person name="Bielke C."/>
            <person name="Frishman D."/>
            <person name="Haase D."/>
            <person name="Lemcke K."/>
            <person name="Mewes H.-W."/>
            <person name="Stocker S."/>
            <person name="Zaccaria P."/>
            <person name="Bevan M."/>
            <person name="Wilson R.K."/>
            <person name="de la Bastide M."/>
            <person name="Habermann K."/>
            <person name="Parnell L."/>
            <person name="Dedhia N."/>
            <person name="Gnoj L."/>
            <person name="Schutz K."/>
            <person name="Huang E."/>
            <person name="Spiegel L."/>
            <person name="Sekhon M."/>
            <person name="Murray J."/>
            <person name="Sheet P."/>
            <person name="Cordes M."/>
            <person name="Abu-Threideh J."/>
            <person name="Stoneking T."/>
            <person name="Kalicki J."/>
            <person name="Graves T."/>
            <person name="Harmon G."/>
            <person name="Edwards J."/>
            <person name="Latreille P."/>
            <person name="Courtney L."/>
            <person name="Cloud J."/>
            <person name="Abbott A."/>
            <person name="Scott K."/>
            <person name="Johnson D."/>
            <person name="Minx P."/>
            <person name="Bentley D."/>
            <person name="Fulton B."/>
            <person name="Miller N."/>
            <person name="Greco T."/>
            <person name="Kemp K."/>
            <person name="Kramer J."/>
            <person name="Fulton L."/>
            <person name="Mardis E."/>
            <person name="Dante M."/>
            <person name="Pepin K."/>
            <person name="Hillier L.W."/>
            <person name="Nelson J."/>
            <person name="Spieth J."/>
            <person name="Ryan E."/>
            <person name="Andrews S."/>
            <person name="Geisel C."/>
            <person name="Layman D."/>
            <person name="Du H."/>
            <person name="Ali J."/>
            <person name="Berghoff A."/>
            <person name="Jones K."/>
            <person name="Drone K."/>
            <person name="Cotton M."/>
            <person name="Joshu C."/>
            <person name="Antonoiu B."/>
            <person name="Zidanic M."/>
            <person name="Strong C."/>
            <person name="Sun H."/>
            <person name="Lamar B."/>
            <person name="Yordan C."/>
            <person name="Ma P."/>
            <person name="Zhong J."/>
            <person name="Preston R."/>
            <person name="Vil D."/>
            <person name="Shekher M."/>
            <person name="Matero A."/>
            <person name="Shah R."/>
            <person name="Swaby I.K."/>
            <person name="O'Shaughnessy A."/>
            <person name="Rodriguez M."/>
            <person name="Hoffman J."/>
            <person name="Till S."/>
            <person name="Granat S."/>
            <person name="Shohdy N."/>
            <person name="Hasegawa A."/>
            <person name="Hameed A."/>
            <person name="Lodhi M."/>
            <person name="Johnson A."/>
            <person name="Chen E."/>
            <person name="Marra M.A."/>
            <person name="Martienssen R."/>
            <person name="McCombie W.R."/>
        </authorList>
    </citation>
    <scope>NUCLEOTIDE SEQUENCE [LARGE SCALE GENOMIC DNA]</scope>
    <source>
        <strain>cv. Columbia</strain>
    </source>
</reference>
<reference key="2">
    <citation type="journal article" date="2017" name="Plant J.">
        <title>Araport11: a complete reannotation of the Arabidopsis thaliana reference genome.</title>
        <authorList>
            <person name="Cheng C.Y."/>
            <person name="Krishnakumar V."/>
            <person name="Chan A.P."/>
            <person name="Thibaud-Nissen F."/>
            <person name="Schobel S."/>
            <person name="Town C.D."/>
        </authorList>
    </citation>
    <scope>GENOME REANNOTATION</scope>
    <source>
        <strain>cv. Columbia</strain>
    </source>
</reference>
<reference key="3">
    <citation type="journal article" date="2003" name="Science">
        <title>Empirical analysis of transcriptional activity in the Arabidopsis genome.</title>
        <authorList>
            <person name="Yamada K."/>
            <person name="Lim J."/>
            <person name="Dale J.M."/>
            <person name="Chen H."/>
            <person name="Shinn P."/>
            <person name="Palm C.J."/>
            <person name="Southwick A.M."/>
            <person name="Wu H.C."/>
            <person name="Kim C.J."/>
            <person name="Nguyen M."/>
            <person name="Pham P.K."/>
            <person name="Cheuk R.F."/>
            <person name="Karlin-Newmann G."/>
            <person name="Liu S.X."/>
            <person name="Lam B."/>
            <person name="Sakano H."/>
            <person name="Wu T."/>
            <person name="Yu G."/>
            <person name="Miranda M."/>
            <person name="Quach H.L."/>
            <person name="Tripp M."/>
            <person name="Chang C.H."/>
            <person name="Lee J.M."/>
            <person name="Toriumi M.J."/>
            <person name="Chan M.M."/>
            <person name="Tang C.C."/>
            <person name="Onodera C.S."/>
            <person name="Deng J.M."/>
            <person name="Akiyama K."/>
            <person name="Ansari Y."/>
            <person name="Arakawa T."/>
            <person name="Banh J."/>
            <person name="Banno F."/>
            <person name="Bowser L."/>
            <person name="Brooks S.Y."/>
            <person name="Carninci P."/>
            <person name="Chao Q."/>
            <person name="Choy N."/>
            <person name="Enju A."/>
            <person name="Goldsmith A.D."/>
            <person name="Gurjal M."/>
            <person name="Hansen N.F."/>
            <person name="Hayashizaki Y."/>
            <person name="Johnson-Hopson C."/>
            <person name="Hsuan V.W."/>
            <person name="Iida K."/>
            <person name="Karnes M."/>
            <person name="Khan S."/>
            <person name="Koesema E."/>
            <person name="Ishida J."/>
            <person name="Jiang P.X."/>
            <person name="Jones T."/>
            <person name="Kawai J."/>
            <person name="Kamiya A."/>
            <person name="Meyers C."/>
            <person name="Nakajima M."/>
            <person name="Narusaka M."/>
            <person name="Seki M."/>
            <person name="Sakurai T."/>
            <person name="Satou M."/>
            <person name="Tamse R."/>
            <person name="Vaysberg M."/>
            <person name="Wallender E.K."/>
            <person name="Wong C."/>
            <person name="Yamamura Y."/>
            <person name="Yuan S."/>
            <person name="Shinozaki K."/>
            <person name="Davis R.W."/>
            <person name="Theologis A."/>
            <person name="Ecker J.R."/>
        </authorList>
    </citation>
    <scope>NUCLEOTIDE SEQUENCE [LARGE SCALE MRNA]</scope>
    <source>
        <strain>cv. Columbia</strain>
    </source>
</reference>
<reference key="4">
    <citation type="journal article" date="2008" name="PLoS ONE">
        <title>Sorting signals, N-terminal modifications and abundance of the chloroplast proteome.</title>
        <authorList>
            <person name="Zybailov B."/>
            <person name="Rutschow H."/>
            <person name="Friso G."/>
            <person name="Rudella A."/>
            <person name="Emanuelsson O."/>
            <person name="Sun Q."/>
            <person name="van Wijk K.J."/>
        </authorList>
    </citation>
    <scope>IDENTIFICATION BY MASS SPECTROMETRY</scope>
    <scope>SUBCELLULAR LOCATION [LARGE SCALE ANALYSIS]</scope>
</reference>
<reference key="5">
    <citation type="journal article" date="2012" name="Mol. Cell. Proteomics">
        <title>Comparative large-scale characterisation of plant vs. mammal proteins reveals similar and idiosyncratic N-alpha acetylation features.</title>
        <authorList>
            <person name="Bienvenut W.V."/>
            <person name="Sumpton D."/>
            <person name="Martinez A."/>
            <person name="Lilla S."/>
            <person name="Espagne C."/>
            <person name="Meinnel T."/>
            <person name="Giglione C."/>
        </authorList>
    </citation>
    <scope>ACETYLATION [LARGE SCALE ANALYSIS] AT SER-52</scope>
    <scope>CLEAVAGE OF TRANSIT PEPTIDE [LARGE SCALE ANALYSIS] AFTER SER-51</scope>
    <scope>IDENTIFICATION BY MASS SPECTROMETRY [LARGE SCALE ANALYSIS]</scope>
</reference>
<evidence type="ECO:0000250" key="1"/>
<evidence type="ECO:0000269" key="2">
    <source>
    </source>
</evidence>
<evidence type="ECO:0000305" key="3"/>
<evidence type="ECO:0007744" key="4">
    <source>
    </source>
</evidence>
<name>FOLD4_ARATH</name>
<protein>
    <recommendedName>
        <fullName>Bifunctional protein FolD 4, chloroplastic</fullName>
    </recommendedName>
    <alternativeName>
        <fullName>Protein EMBRYO DEFECTIVE 3127</fullName>
    </alternativeName>
    <alternativeName>
        <fullName>Tetrahydrofolate dehydrogenase/cyclohydrolase 4</fullName>
    </alternativeName>
    <domain>
        <recommendedName>
            <fullName>Methylenetetrahydrofolate dehydrogenase</fullName>
            <ecNumber>1.5.1.5</ecNumber>
        </recommendedName>
    </domain>
    <domain>
        <recommendedName>
            <fullName>Methenyltetrahydrofolate cyclohydrolase</fullName>
            <ecNumber>3.5.4.9</ecNumber>
        </recommendedName>
    </domain>
</protein>
<organism>
    <name type="scientific">Arabidopsis thaliana</name>
    <name type="common">Mouse-ear cress</name>
    <dbReference type="NCBI Taxonomy" id="3702"/>
    <lineage>
        <taxon>Eukaryota</taxon>
        <taxon>Viridiplantae</taxon>
        <taxon>Streptophyta</taxon>
        <taxon>Embryophyta</taxon>
        <taxon>Tracheophyta</taxon>
        <taxon>Spermatophyta</taxon>
        <taxon>Magnoliopsida</taxon>
        <taxon>eudicotyledons</taxon>
        <taxon>Gunneridae</taxon>
        <taxon>Pentapetalae</taxon>
        <taxon>rosids</taxon>
        <taxon>malvids</taxon>
        <taxon>Brassicales</taxon>
        <taxon>Brassicaceae</taxon>
        <taxon>Camelineae</taxon>
        <taxon>Arabidopsis</taxon>
    </lineage>
</organism>
<accession>O65271</accession>